<sequence>MDLQENLVSDAGDDHMVDIVVEPHSNRDIGIVDEFNIGGDVGFSGDLDLEPRNGIDFDTHEAAYIFYQEYAKSMGFTTSIKNSRRSKKTKDFIDAKFACSRYGVTPESESSGSSSRRSTVKKTDCKASMHVKRRPDGKWIIHEFVKDHNHELLPALAYHFRIQRNVKLAEKNNIDILHAVSERTKKMYVEMSRQSGGYKNIGSLLQTDVSSQVDKGRYLALEEGDSQVLLEYFKRIKKENPKFFYAIDLNEDQRLRNLFWADAKSRDDYLSFNDVVSFDTTYVKFNDKLPLALFIGVNHHSQPMLLGCALVADESMETFVWLIKTWLRAMGGRAPKVILTDQDKFLMSAVSELLPNTRHCFALWHVLEKIPEYFSHVMKRHENFLLKFNKCIFRSWTDDEFDMRWWKMVSQFGLENDEWLLWLHEHRQKWVPTFMSDVFLAGMSTSQRSESVNSFFDKYIHKKITLKEFLRQYGVILQNRYEEESVADFDTCHKQPALKSPSPWEKQMATTYTHTIFKKFQVEVLGVVACHPRKEKEDENMATFRVQDCEKDDDFLVTWSKTKSELCCFCRMFEYKGFLCRHALMILQMCGFASIPPQYILKRWTKDAKSGVLAGEGADQIQTRVQRYNDLCSRATELSEEGCVSEENYNIALRTLVETLKNCVDMNNARNNITESNSQLNNGTHEEENQVMAGVKATKKKTVYRKRKGQQEASQMLESQQSLQPMETISSEAMDMNGYYGPQQNVQGLLNLMEPPHEGYYVDQRTIQGLGQLNSIAPAQDSFFTNQQAMSGMVGQIDFRPPPNFTYTLQEEHLSSAQLPGSSSRQL</sequence>
<evidence type="ECO:0000255" key="1">
    <source>
        <dbReference type="PROSITE-ProRule" id="PRU00325"/>
    </source>
</evidence>
<evidence type="ECO:0000256" key="2">
    <source>
        <dbReference type="SAM" id="MobiDB-lite"/>
    </source>
</evidence>
<evidence type="ECO:0000269" key="3">
    <source>
    </source>
</evidence>
<evidence type="ECO:0000269" key="4">
    <source>
    </source>
</evidence>
<evidence type="ECO:0000269" key="5">
    <source>
    </source>
</evidence>
<evidence type="ECO:0000269" key="6">
    <source>
    </source>
</evidence>
<evidence type="ECO:0000269" key="7">
    <source>
    </source>
</evidence>
<evidence type="ECO:0000305" key="8"/>
<protein>
    <recommendedName>
        <fullName>Protein FAR-RED IMPAIRED RESPONSE 1</fullName>
    </recommendedName>
</protein>
<name>FAR1_ARATH</name>
<proteinExistence type="evidence at protein level"/>
<dbReference type="EMBL" id="AF159587">
    <property type="protein sequence ID" value="AAD51282.1"/>
    <property type="molecule type" value="mRNA"/>
</dbReference>
<dbReference type="EMBL" id="Z97337">
    <property type="protein sequence ID" value="CAB10288.1"/>
    <property type="status" value="ALT_SEQ"/>
    <property type="molecule type" value="Genomic_DNA"/>
</dbReference>
<dbReference type="EMBL" id="AL161540">
    <property type="protein sequence ID" value="CAB78551.1"/>
    <property type="status" value="ALT_SEQ"/>
    <property type="molecule type" value="Genomic_DNA"/>
</dbReference>
<dbReference type="EMBL" id="CP002687">
    <property type="protein sequence ID" value="AEE83553.1"/>
    <property type="molecule type" value="Genomic_DNA"/>
</dbReference>
<dbReference type="EMBL" id="CP002687">
    <property type="protein sequence ID" value="ANM67625.1"/>
    <property type="molecule type" value="Genomic_DNA"/>
</dbReference>
<dbReference type="EMBL" id="CP002687">
    <property type="protein sequence ID" value="ANM67626.1"/>
    <property type="molecule type" value="Genomic_DNA"/>
</dbReference>
<dbReference type="EMBL" id="CP002687">
    <property type="protein sequence ID" value="ANM67627.1"/>
    <property type="molecule type" value="Genomic_DNA"/>
</dbReference>
<dbReference type="EMBL" id="CP002687">
    <property type="protein sequence ID" value="ANM67628.1"/>
    <property type="molecule type" value="Genomic_DNA"/>
</dbReference>
<dbReference type="PIR" id="F71414">
    <property type="entry name" value="F71414"/>
</dbReference>
<dbReference type="PIR" id="T02124">
    <property type="entry name" value="T02124"/>
</dbReference>
<dbReference type="RefSeq" id="NP_001329443.1">
    <property type="nucleotide sequence ID" value="NM_001340994.1"/>
</dbReference>
<dbReference type="RefSeq" id="NP_001329444.1">
    <property type="nucleotide sequence ID" value="NM_001340995.1"/>
</dbReference>
<dbReference type="RefSeq" id="NP_001329445.1">
    <property type="nucleotide sequence ID" value="NM_001340992.1"/>
</dbReference>
<dbReference type="RefSeq" id="NP_001329446.1">
    <property type="nucleotide sequence ID" value="NM_001340993.1"/>
</dbReference>
<dbReference type="RefSeq" id="NP_567455.4">
    <property type="nucleotide sequence ID" value="NM_117596.6"/>
</dbReference>
<dbReference type="BioGRID" id="12470">
    <property type="interactions" value="14"/>
</dbReference>
<dbReference type="FunCoup" id="Q9SWG3">
    <property type="interactions" value="776"/>
</dbReference>
<dbReference type="IntAct" id="Q9SWG3">
    <property type="interactions" value="12"/>
</dbReference>
<dbReference type="STRING" id="3702.Q9SWG3"/>
<dbReference type="iPTMnet" id="Q9SWG3"/>
<dbReference type="PaxDb" id="3702-AT4G15090.1"/>
<dbReference type="ProteomicsDB" id="222444"/>
<dbReference type="EnsemblPlants" id="AT4G15090.1">
    <property type="protein sequence ID" value="AT4G15090.1"/>
    <property type="gene ID" value="AT4G15090"/>
</dbReference>
<dbReference type="EnsemblPlants" id="AT4G15090.2">
    <property type="protein sequence ID" value="AT4G15090.2"/>
    <property type="gene ID" value="AT4G15090"/>
</dbReference>
<dbReference type="EnsemblPlants" id="AT4G15090.3">
    <property type="protein sequence ID" value="AT4G15090.3"/>
    <property type="gene ID" value="AT4G15090"/>
</dbReference>
<dbReference type="EnsemblPlants" id="AT4G15090.4">
    <property type="protein sequence ID" value="AT4G15090.4"/>
    <property type="gene ID" value="AT4G15090"/>
</dbReference>
<dbReference type="EnsemblPlants" id="AT4G15090.5">
    <property type="protein sequence ID" value="AT4G15090.5"/>
    <property type="gene ID" value="AT4G15090"/>
</dbReference>
<dbReference type="GeneID" id="827173"/>
<dbReference type="Gramene" id="AT4G15090.1">
    <property type="protein sequence ID" value="AT4G15090.1"/>
    <property type="gene ID" value="AT4G15090"/>
</dbReference>
<dbReference type="Gramene" id="AT4G15090.2">
    <property type="protein sequence ID" value="AT4G15090.2"/>
    <property type="gene ID" value="AT4G15090"/>
</dbReference>
<dbReference type="Gramene" id="AT4G15090.3">
    <property type="protein sequence ID" value="AT4G15090.3"/>
    <property type="gene ID" value="AT4G15090"/>
</dbReference>
<dbReference type="Gramene" id="AT4G15090.4">
    <property type="protein sequence ID" value="AT4G15090.4"/>
    <property type="gene ID" value="AT4G15090"/>
</dbReference>
<dbReference type="Gramene" id="AT4G15090.5">
    <property type="protein sequence ID" value="AT4G15090.5"/>
    <property type="gene ID" value="AT4G15090"/>
</dbReference>
<dbReference type="KEGG" id="ath:AT4G15090"/>
<dbReference type="Araport" id="AT4G15090"/>
<dbReference type="TAIR" id="AT4G15090">
    <property type="gene designation" value="FAR1"/>
</dbReference>
<dbReference type="eggNOG" id="ENOG502QS58">
    <property type="taxonomic scope" value="Eukaryota"/>
</dbReference>
<dbReference type="HOGENOM" id="CLU_008459_7_1_1"/>
<dbReference type="InParanoid" id="Q9SWG3"/>
<dbReference type="OMA" id="NTRHCFA"/>
<dbReference type="PhylomeDB" id="Q9SWG3"/>
<dbReference type="PRO" id="PR:Q9SWG3"/>
<dbReference type="Proteomes" id="UP000006548">
    <property type="component" value="Chromosome 4"/>
</dbReference>
<dbReference type="ExpressionAtlas" id="Q9SWG3">
    <property type="expression patterns" value="baseline and differential"/>
</dbReference>
<dbReference type="GO" id="GO:0005634">
    <property type="term" value="C:nucleus"/>
    <property type="evidence" value="ECO:0000314"/>
    <property type="project" value="TAIR"/>
</dbReference>
<dbReference type="GO" id="GO:0003700">
    <property type="term" value="F:DNA-binding transcription factor activity"/>
    <property type="evidence" value="ECO:0000314"/>
    <property type="project" value="TAIR"/>
</dbReference>
<dbReference type="GO" id="GO:0008270">
    <property type="term" value="F:zinc ion binding"/>
    <property type="evidence" value="ECO:0007669"/>
    <property type="project" value="UniProtKB-KW"/>
</dbReference>
<dbReference type="GO" id="GO:0010018">
    <property type="term" value="P:far-red light signaling pathway"/>
    <property type="evidence" value="ECO:0000315"/>
    <property type="project" value="TAIR"/>
</dbReference>
<dbReference type="GO" id="GO:1900056">
    <property type="term" value="P:negative regulation of leaf senescence"/>
    <property type="evidence" value="ECO:0000315"/>
    <property type="project" value="TAIR"/>
</dbReference>
<dbReference type="GO" id="GO:0042753">
    <property type="term" value="P:positive regulation of circadian rhythm"/>
    <property type="evidence" value="ECO:0000315"/>
    <property type="project" value="TAIR"/>
</dbReference>
<dbReference type="GO" id="GO:0045893">
    <property type="term" value="P:positive regulation of DNA-templated transcription"/>
    <property type="evidence" value="ECO:0000314"/>
    <property type="project" value="TAIR"/>
</dbReference>
<dbReference type="GO" id="GO:0010017">
    <property type="term" value="P:red or far-red light signaling pathway"/>
    <property type="evidence" value="ECO:0000315"/>
    <property type="project" value="TAIR"/>
</dbReference>
<dbReference type="GO" id="GO:0010218">
    <property type="term" value="P:response to far red light"/>
    <property type="evidence" value="ECO:0000315"/>
    <property type="project" value="TAIR"/>
</dbReference>
<dbReference type="GO" id="GO:0009639">
    <property type="term" value="P:response to red or far red light"/>
    <property type="evidence" value="ECO:0000315"/>
    <property type="project" value="TAIR"/>
</dbReference>
<dbReference type="InterPro" id="IPR004330">
    <property type="entry name" value="FAR1_DNA_bnd_dom"/>
</dbReference>
<dbReference type="InterPro" id="IPR031052">
    <property type="entry name" value="FHY3/FAR1"/>
</dbReference>
<dbReference type="InterPro" id="IPR018289">
    <property type="entry name" value="MULE_transposase_dom"/>
</dbReference>
<dbReference type="InterPro" id="IPR006564">
    <property type="entry name" value="Znf_PMZ"/>
</dbReference>
<dbReference type="InterPro" id="IPR007527">
    <property type="entry name" value="Znf_SWIM"/>
</dbReference>
<dbReference type="PANTHER" id="PTHR31669:SF21">
    <property type="entry name" value="PROTEIN FAR-RED IMPAIRED RESPONSE 1"/>
    <property type="match status" value="1"/>
</dbReference>
<dbReference type="PANTHER" id="PTHR31669">
    <property type="entry name" value="PROTEIN FAR1-RELATED SEQUENCE 10-RELATED"/>
    <property type="match status" value="1"/>
</dbReference>
<dbReference type="Pfam" id="PF03101">
    <property type="entry name" value="FAR1"/>
    <property type="match status" value="1"/>
</dbReference>
<dbReference type="Pfam" id="PF10551">
    <property type="entry name" value="MULE"/>
    <property type="match status" value="1"/>
</dbReference>
<dbReference type="Pfam" id="PF04434">
    <property type="entry name" value="SWIM"/>
    <property type="match status" value="1"/>
</dbReference>
<dbReference type="SMART" id="SM00575">
    <property type="entry name" value="ZnF_PMZ"/>
    <property type="match status" value="1"/>
</dbReference>
<dbReference type="PROSITE" id="PS50966">
    <property type="entry name" value="ZF_SWIM"/>
    <property type="match status" value="1"/>
</dbReference>
<feature type="chain" id="PRO_0000363478" description="Protein FAR-RED IMPAIRED RESPONSE 1">
    <location>
        <begin position="1"/>
        <end position="827"/>
    </location>
</feature>
<feature type="domain" description="FAR1">
    <location>
        <begin position="65"/>
        <end position="154"/>
    </location>
</feature>
<feature type="domain" description="MULE">
    <location>
        <begin position="275"/>
        <end position="371"/>
    </location>
</feature>
<feature type="zinc finger region" description="SWIM-type" evidence="1">
    <location>
        <begin position="555"/>
        <end position="591"/>
    </location>
</feature>
<feature type="region of interest" description="Disordered" evidence="2">
    <location>
        <begin position="103"/>
        <end position="126"/>
    </location>
</feature>
<feature type="compositionally biased region" description="Low complexity" evidence="2">
    <location>
        <begin position="107"/>
        <end position="117"/>
    </location>
</feature>
<gene>
    <name type="primary">FAR1</name>
    <name type="ordered locus">At4g15090</name>
    <name type="ORF">dl3590w</name>
    <name type="ORF">FCAALL.134</name>
</gene>
<keyword id="KW-0479">Metal-binding</keyword>
<keyword id="KW-0539">Nucleus</keyword>
<keyword id="KW-1185">Reference proteome</keyword>
<keyword id="KW-0862">Zinc</keyword>
<keyword id="KW-0863">Zinc-finger</keyword>
<reference key="1">
    <citation type="journal article" date="1999" name="Genes Dev.">
        <title>The FAR1 locus encodes a novel nuclear protein specific to phytochrome A signaling.</title>
        <authorList>
            <person name="Hudson M."/>
            <person name="Ringli C."/>
            <person name="Boylan M.T."/>
            <person name="Quail P.H."/>
        </authorList>
    </citation>
    <scope>NUCLEOTIDE SEQUENCE [MRNA]</scope>
    <scope>SUBCELLULAR LOCATION</scope>
    <scope>DISRUPTION PHENOTYPE</scope>
    <source>
        <strain>cv. No-0</strain>
    </source>
</reference>
<reference key="2">
    <citation type="journal article" date="1998" name="Nature">
        <title>Analysis of 1.9 Mb of contiguous sequence from chromosome 4 of Arabidopsis thaliana.</title>
        <authorList>
            <person name="Bevan M."/>
            <person name="Bancroft I."/>
            <person name="Bent E."/>
            <person name="Love K."/>
            <person name="Goodman H.M."/>
            <person name="Dean C."/>
            <person name="Bergkamp R."/>
            <person name="Dirkse W."/>
            <person name="van Staveren M."/>
            <person name="Stiekema W."/>
            <person name="Drost L."/>
            <person name="Ridley P."/>
            <person name="Hudson S.-A."/>
            <person name="Patel K."/>
            <person name="Murphy G."/>
            <person name="Piffanelli P."/>
            <person name="Wedler H."/>
            <person name="Wedler E."/>
            <person name="Wambutt R."/>
            <person name="Weitzenegger T."/>
            <person name="Pohl T."/>
            <person name="Terryn N."/>
            <person name="Gielen J."/>
            <person name="Villarroel R."/>
            <person name="De Clercq R."/>
            <person name="van Montagu M."/>
            <person name="Lecharny A."/>
            <person name="Aubourg S."/>
            <person name="Gy I."/>
            <person name="Kreis M."/>
            <person name="Lao N."/>
            <person name="Kavanagh T."/>
            <person name="Hempel S."/>
            <person name="Kotter P."/>
            <person name="Entian K.-D."/>
            <person name="Rieger M."/>
            <person name="Schaefer M."/>
            <person name="Funk B."/>
            <person name="Mueller-Auer S."/>
            <person name="Silvey M."/>
            <person name="James R."/>
            <person name="Monfort A."/>
            <person name="Pons A."/>
            <person name="Puigdomenech P."/>
            <person name="Douka A."/>
            <person name="Voukelatou E."/>
            <person name="Milioni D."/>
            <person name="Hatzopoulos P."/>
            <person name="Piravandi E."/>
            <person name="Obermaier B."/>
            <person name="Hilbert H."/>
            <person name="Duesterhoeft A."/>
            <person name="Moores T."/>
            <person name="Jones J.D.G."/>
            <person name="Eneva T."/>
            <person name="Palme K."/>
            <person name="Benes V."/>
            <person name="Rechmann S."/>
            <person name="Ansorge W."/>
            <person name="Cooke R."/>
            <person name="Berger C."/>
            <person name="Delseny M."/>
            <person name="Voet M."/>
            <person name="Volckaert G."/>
            <person name="Mewes H.-W."/>
            <person name="Klosterman S."/>
            <person name="Schueller C."/>
            <person name="Chalwatzis N."/>
        </authorList>
    </citation>
    <scope>NUCLEOTIDE SEQUENCE [LARGE SCALE GENOMIC DNA]</scope>
    <source>
        <strain>cv. Columbia</strain>
    </source>
</reference>
<reference key="3">
    <citation type="journal article" date="1999" name="Nature">
        <title>Sequence and analysis of chromosome 4 of the plant Arabidopsis thaliana.</title>
        <authorList>
            <person name="Mayer K.F.X."/>
            <person name="Schueller C."/>
            <person name="Wambutt R."/>
            <person name="Murphy G."/>
            <person name="Volckaert G."/>
            <person name="Pohl T."/>
            <person name="Duesterhoeft A."/>
            <person name="Stiekema W."/>
            <person name="Entian K.-D."/>
            <person name="Terryn N."/>
            <person name="Harris B."/>
            <person name="Ansorge W."/>
            <person name="Brandt P."/>
            <person name="Grivell L.A."/>
            <person name="Rieger M."/>
            <person name="Weichselgartner M."/>
            <person name="de Simone V."/>
            <person name="Obermaier B."/>
            <person name="Mache R."/>
            <person name="Mueller M."/>
            <person name="Kreis M."/>
            <person name="Delseny M."/>
            <person name="Puigdomenech P."/>
            <person name="Watson M."/>
            <person name="Schmidtheini T."/>
            <person name="Reichert B."/>
            <person name="Portetelle D."/>
            <person name="Perez-Alonso M."/>
            <person name="Boutry M."/>
            <person name="Bancroft I."/>
            <person name="Vos P."/>
            <person name="Hoheisel J."/>
            <person name="Zimmermann W."/>
            <person name="Wedler H."/>
            <person name="Ridley P."/>
            <person name="Langham S.-A."/>
            <person name="McCullagh B."/>
            <person name="Bilham L."/>
            <person name="Robben J."/>
            <person name="van der Schueren J."/>
            <person name="Grymonprez B."/>
            <person name="Chuang Y.-J."/>
            <person name="Vandenbussche F."/>
            <person name="Braeken M."/>
            <person name="Weltjens I."/>
            <person name="Voet M."/>
            <person name="Bastiaens I."/>
            <person name="Aert R."/>
            <person name="Defoor E."/>
            <person name="Weitzenegger T."/>
            <person name="Bothe G."/>
            <person name="Ramsperger U."/>
            <person name="Hilbert H."/>
            <person name="Braun M."/>
            <person name="Holzer E."/>
            <person name="Brandt A."/>
            <person name="Peters S."/>
            <person name="van Staveren M."/>
            <person name="Dirkse W."/>
            <person name="Mooijman P."/>
            <person name="Klein Lankhorst R."/>
            <person name="Rose M."/>
            <person name="Hauf J."/>
            <person name="Koetter P."/>
            <person name="Berneiser S."/>
            <person name="Hempel S."/>
            <person name="Feldpausch M."/>
            <person name="Lamberth S."/>
            <person name="Van den Daele H."/>
            <person name="De Keyser A."/>
            <person name="Buysshaert C."/>
            <person name="Gielen J."/>
            <person name="Villarroel R."/>
            <person name="De Clercq R."/>
            <person name="van Montagu M."/>
            <person name="Rogers J."/>
            <person name="Cronin A."/>
            <person name="Quail M.A."/>
            <person name="Bray-Allen S."/>
            <person name="Clark L."/>
            <person name="Doggett J."/>
            <person name="Hall S."/>
            <person name="Kay M."/>
            <person name="Lennard N."/>
            <person name="McLay K."/>
            <person name="Mayes R."/>
            <person name="Pettett A."/>
            <person name="Rajandream M.A."/>
            <person name="Lyne M."/>
            <person name="Benes V."/>
            <person name="Rechmann S."/>
            <person name="Borkova D."/>
            <person name="Bloecker H."/>
            <person name="Scharfe M."/>
            <person name="Grimm M."/>
            <person name="Loehnert T.-H."/>
            <person name="Dose S."/>
            <person name="de Haan M."/>
            <person name="Maarse A.C."/>
            <person name="Schaefer M."/>
            <person name="Mueller-Auer S."/>
            <person name="Gabel C."/>
            <person name="Fuchs M."/>
            <person name="Fartmann B."/>
            <person name="Granderath K."/>
            <person name="Dauner D."/>
            <person name="Herzl A."/>
            <person name="Neumann S."/>
            <person name="Argiriou A."/>
            <person name="Vitale D."/>
            <person name="Liguori R."/>
            <person name="Piravandi E."/>
            <person name="Massenet O."/>
            <person name="Quigley F."/>
            <person name="Clabauld G."/>
            <person name="Muendlein A."/>
            <person name="Felber R."/>
            <person name="Schnabl S."/>
            <person name="Hiller R."/>
            <person name="Schmidt W."/>
            <person name="Lecharny A."/>
            <person name="Aubourg S."/>
            <person name="Chefdor F."/>
            <person name="Cooke R."/>
            <person name="Berger C."/>
            <person name="Monfort A."/>
            <person name="Casacuberta E."/>
            <person name="Gibbons T."/>
            <person name="Weber N."/>
            <person name="Vandenbol M."/>
            <person name="Bargues M."/>
            <person name="Terol J."/>
            <person name="Torres A."/>
            <person name="Perez-Perez A."/>
            <person name="Purnelle B."/>
            <person name="Bent E."/>
            <person name="Johnson S."/>
            <person name="Tacon D."/>
            <person name="Jesse T."/>
            <person name="Heijnen L."/>
            <person name="Schwarz S."/>
            <person name="Scholler P."/>
            <person name="Heber S."/>
            <person name="Francs P."/>
            <person name="Bielke C."/>
            <person name="Frishman D."/>
            <person name="Haase D."/>
            <person name="Lemcke K."/>
            <person name="Mewes H.-W."/>
            <person name="Stocker S."/>
            <person name="Zaccaria P."/>
            <person name="Bevan M."/>
            <person name="Wilson R.K."/>
            <person name="de la Bastide M."/>
            <person name="Habermann K."/>
            <person name="Parnell L."/>
            <person name="Dedhia N."/>
            <person name="Gnoj L."/>
            <person name="Schutz K."/>
            <person name="Huang E."/>
            <person name="Spiegel L."/>
            <person name="Sekhon M."/>
            <person name="Murray J."/>
            <person name="Sheet P."/>
            <person name="Cordes M."/>
            <person name="Abu-Threideh J."/>
            <person name="Stoneking T."/>
            <person name="Kalicki J."/>
            <person name="Graves T."/>
            <person name="Harmon G."/>
            <person name="Edwards J."/>
            <person name="Latreille P."/>
            <person name="Courtney L."/>
            <person name="Cloud J."/>
            <person name="Abbott A."/>
            <person name="Scott K."/>
            <person name="Johnson D."/>
            <person name="Minx P."/>
            <person name="Bentley D."/>
            <person name="Fulton B."/>
            <person name="Miller N."/>
            <person name="Greco T."/>
            <person name="Kemp K."/>
            <person name="Kramer J."/>
            <person name="Fulton L."/>
            <person name="Mardis E."/>
            <person name="Dante M."/>
            <person name="Pepin K."/>
            <person name="Hillier L.W."/>
            <person name="Nelson J."/>
            <person name="Spieth J."/>
            <person name="Ryan E."/>
            <person name="Andrews S."/>
            <person name="Geisel C."/>
            <person name="Layman D."/>
            <person name="Du H."/>
            <person name="Ali J."/>
            <person name="Berghoff A."/>
            <person name="Jones K."/>
            <person name="Drone K."/>
            <person name="Cotton M."/>
            <person name="Joshu C."/>
            <person name="Antonoiu B."/>
            <person name="Zidanic M."/>
            <person name="Strong C."/>
            <person name="Sun H."/>
            <person name="Lamar B."/>
            <person name="Yordan C."/>
            <person name="Ma P."/>
            <person name="Zhong J."/>
            <person name="Preston R."/>
            <person name="Vil D."/>
            <person name="Shekher M."/>
            <person name="Matero A."/>
            <person name="Shah R."/>
            <person name="Swaby I.K."/>
            <person name="O'Shaughnessy A."/>
            <person name="Rodriguez M."/>
            <person name="Hoffman J."/>
            <person name="Till S."/>
            <person name="Granat S."/>
            <person name="Shohdy N."/>
            <person name="Hasegawa A."/>
            <person name="Hameed A."/>
            <person name="Lodhi M."/>
            <person name="Johnson A."/>
            <person name="Chen E."/>
            <person name="Marra M.A."/>
            <person name="Martienssen R."/>
            <person name="McCombie W.R."/>
        </authorList>
    </citation>
    <scope>NUCLEOTIDE SEQUENCE [LARGE SCALE GENOMIC DNA]</scope>
    <source>
        <strain>cv. Columbia</strain>
    </source>
</reference>
<reference key="4">
    <citation type="journal article" date="2017" name="Plant J.">
        <title>Araport11: a complete reannotation of the Arabidopsis thaliana reference genome.</title>
        <authorList>
            <person name="Cheng C.Y."/>
            <person name="Krishnakumar V."/>
            <person name="Chan A.P."/>
            <person name="Thibaud-Nissen F."/>
            <person name="Schobel S."/>
            <person name="Town C.D."/>
        </authorList>
    </citation>
    <scope>GENOME REANNOTATION</scope>
    <source>
        <strain>cv. Columbia</strain>
    </source>
</reference>
<reference key="5">
    <citation type="journal article" date="2002" name="EMBO J.">
        <title>Arabidopsis FHY3 defines a key phytochrome A signaling component directly interacting with its homologous partner FAR1.</title>
        <authorList>
            <person name="Wang H."/>
            <person name="Deng X.W."/>
        </authorList>
    </citation>
    <scope>FUNCTION</scope>
    <scope>INTERACTION WITH FHY3</scope>
</reference>
<reference key="6">
    <citation type="journal article" date="2003" name="Plant J.">
        <title>The FHY3 and FAR1 genes encode transposase-related proteins involved in regulation of gene expression by the phytochrome A-signaling pathway.</title>
        <authorList>
            <person name="Hudson M.E."/>
            <person name="Lisch D.R."/>
            <person name="Quail P.H."/>
        </authorList>
    </citation>
    <scope>FUNCTION</scope>
</reference>
<reference key="7">
    <citation type="journal article" date="2004" name="Plant Physiol.">
        <title>Arabidopsis FHY3/FAR1 gene family and distinct roles of its members in light control of Arabidopsis development.</title>
        <authorList>
            <person name="Lin R."/>
            <person name="Wang H."/>
        </authorList>
    </citation>
    <scope>GENE FAMILY</scope>
    <scope>NOMENCLATURE</scope>
</reference>
<reference key="8">
    <citation type="journal article" date="2007" name="Science">
        <title>Transposase-derived transcription factors regulate light signaling in Arabidopsis.</title>
        <authorList>
            <person name="Lin R."/>
            <person name="Ding L."/>
            <person name="Casola C."/>
            <person name="Ripoll D.R."/>
            <person name="Feschotte C."/>
            <person name="Wang H."/>
        </authorList>
    </citation>
    <scope>FUNCTION</scope>
    <scope>CHARACTERIZATION</scope>
    <scope>INDUCTION</scope>
    <scope>SUBCELLULAR LOCATION</scope>
</reference>
<reference key="9">
    <citation type="journal article" date="2012" name="Plant Cell">
        <title>Transposase-derived proteins FHY3/FAR1 interact with PHYTOCHROME-INTERACTING FACTOR1 to regulate chlorophyll biosynthesis by modulating HEMB1 during deetiolation in Arabidopsis.</title>
        <authorList>
            <person name="Tang W."/>
            <person name="Wang W."/>
            <person name="Chen D."/>
            <person name="Ji Q."/>
            <person name="Jing Y."/>
            <person name="Wang H."/>
            <person name="Lin R."/>
        </authorList>
    </citation>
    <scope>FUNCTION</scope>
    <scope>DISRUPTION PHENOTYPE</scope>
</reference>
<comment type="function">
    <text evidence="4 5 6 7">Transcription activator that recognizes and binds to the DNA consensus sequence 5'-CACGCGC-3'. Activates the expression of FHY1 and FHL involved in light responses. Positive regulator of chlorophyll biosynthesis via the activation of HEMB1 gene expression.</text>
</comment>
<comment type="subunit">
    <text>Homodimer and heterodimer with FHY3.</text>
</comment>
<comment type="interaction">
    <interactant intactId="EBI-625464">
        <id>Q9SWG3</id>
    </interactant>
    <interactant intactId="EBI-625440">
        <id>Q5UBY2</id>
        <label>FRS1</label>
    </interactant>
    <organismsDiffer>false</organismsDiffer>
    <experiments>3</experiments>
</comment>
<comment type="subcellular location">
    <subcellularLocation>
        <location evidence="3 6">Nucleus</location>
    </subcellularLocation>
</comment>
<comment type="induction">
    <text evidence="6">Down-regulated after exposure to far-red light. Subject to a negative feedback regulation by PHYA signaling.</text>
</comment>
<comment type="domain">
    <text>The FAR1 domain is involved in direct DNA binding, the SWIM-type zinc finger is essential for transcriptional activation activity and both the MULE and SWIM domains are essential for dimerization.</text>
</comment>
<comment type="disruption phenotype">
    <text evidence="3 7">Elongated hypocotyls and reduced expansion of cotyledons under continuous far-red light. Reduced protochlorophyllide levels in darkness and less photobleaching in the light.</text>
</comment>
<comment type="similarity">
    <text evidence="8">Belongs to the FHY3/FAR1 family.</text>
</comment>
<comment type="sequence caution" evidence="8">
    <conflict type="erroneous gene model prediction">
        <sequence resource="EMBL-CDS" id="CAB10288"/>
    </conflict>
    <text>The predicted gene At1g03900 has been split into 2 genes: At4g15090 and At4g15093.</text>
</comment>
<comment type="sequence caution" evidence="8">
    <conflict type="erroneous gene model prediction">
        <sequence resource="EMBL-CDS" id="CAB78551"/>
    </conflict>
    <text>The predicted gene At1g03900 has been split into 2 genes: At4g15090 and At4g15093.</text>
</comment>
<accession>Q9SWG3</accession>
<accession>O23363</accession>
<organism>
    <name type="scientific">Arabidopsis thaliana</name>
    <name type="common">Mouse-ear cress</name>
    <dbReference type="NCBI Taxonomy" id="3702"/>
    <lineage>
        <taxon>Eukaryota</taxon>
        <taxon>Viridiplantae</taxon>
        <taxon>Streptophyta</taxon>
        <taxon>Embryophyta</taxon>
        <taxon>Tracheophyta</taxon>
        <taxon>Spermatophyta</taxon>
        <taxon>Magnoliopsida</taxon>
        <taxon>eudicotyledons</taxon>
        <taxon>Gunneridae</taxon>
        <taxon>Pentapetalae</taxon>
        <taxon>rosids</taxon>
        <taxon>malvids</taxon>
        <taxon>Brassicales</taxon>
        <taxon>Brassicaceae</taxon>
        <taxon>Camelineae</taxon>
        <taxon>Arabidopsis</taxon>
    </lineage>
</organism>